<accession>Q9HBL8</accession>
<protein>
    <recommendedName>
        <fullName>NmrA-like family domain-containing protein 1</fullName>
    </recommendedName>
</protein>
<name>NMRL1_HUMAN</name>
<evidence type="ECO:0000269" key="1">
    <source>
    </source>
</evidence>
<evidence type="ECO:0000269" key="2">
    <source>
    </source>
</evidence>
<evidence type="ECO:0000269" key="3">
    <source>
    </source>
</evidence>
<evidence type="ECO:0000269" key="4">
    <source ref="8"/>
</evidence>
<evidence type="ECO:0000305" key="5"/>
<evidence type="ECO:0007829" key="6">
    <source>
        <dbReference type="PDB" id="2WM3"/>
    </source>
</evidence>
<gene>
    <name type="primary">NMRAL1</name>
    <name type="synonym">HSCARG</name>
</gene>
<organism>
    <name type="scientific">Homo sapiens</name>
    <name type="common">Human</name>
    <dbReference type="NCBI Taxonomy" id="9606"/>
    <lineage>
        <taxon>Eukaryota</taxon>
        <taxon>Metazoa</taxon>
        <taxon>Chordata</taxon>
        <taxon>Craniata</taxon>
        <taxon>Vertebrata</taxon>
        <taxon>Euteleostomi</taxon>
        <taxon>Mammalia</taxon>
        <taxon>Eutheria</taxon>
        <taxon>Euarchontoglires</taxon>
        <taxon>Primates</taxon>
        <taxon>Haplorrhini</taxon>
        <taxon>Catarrhini</taxon>
        <taxon>Hominidae</taxon>
        <taxon>Homo</taxon>
    </lineage>
</organism>
<proteinExistence type="evidence at protein level"/>
<dbReference type="EMBL" id="AF225419">
    <property type="protein sequence ID" value="AAG09721.1"/>
    <property type="molecule type" value="mRNA"/>
</dbReference>
<dbReference type="EMBL" id="AC012676">
    <property type="status" value="NOT_ANNOTATED_CDS"/>
    <property type="molecule type" value="Genomic_DNA"/>
</dbReference>
<dbReference type="EMBL" id="AC007606">
    <property type="status" value="NOT_ANNOTATED_CDS"/>
    <property type="molecule type" value="Genomic_DNA"/>
</dbReference>
<dbReference type="EMBL" id="BC002927">
    <property type="protein sequence ID" value="AAH02927.1"/>
    <property type="molecule type" value="mRNA"/>
</dbReference>
<dbReference type="EMBL" id="BC007364">
    <property type="protein sequence ID" value="AAH07364.1"/>
    <property type="molecule type" value="mRNA"/>
</dbReference>
<dbReference type="CCDS" id="CCDS10516.1"/>
<dbReference type="RefSeq" id="NP_001292070.1">
    <property type="nucleotide sequence ID" value="NM_001305141.3"/>
</dbReference>
<dbReference type="RefSeq" id="NP_001292071.1">
    <property type="nucleotide sequence ID" value="NM_001305142.3"/>
</dbReference>
<dbReference type="RefSeq" id="NP_001338923.1">
    <property type="nucleotide sequence ID" value="NM_001351994.2"/>
</dbReference>
<dbReference type="RefSeq" id="NP_065728.1">
    <property type="nucleotide sequence ID" value="NM_020677.6"/>
</dbReference>
<dbReference type="RefSeq" id="XP_047290337.1">
    <property type="nucleotide sequence ID" value="XM_047434381.1"/>
</dbReference>
<dbReference type="RefSeq" id="XP_047290338.1">
    <property type="nucleotide sequence ID" value="XM_047434382.1"/>
</dbReference>
<dbReference type="RefSeq" id="XP_054169494.1">
    <property type="nucleotide sequence ID" value="XM_054313519.1"/>
</dbReference>
<dbReference type="RefSeq" id="XP_054169495.1">
    <property type="nucleotide sequence ID" value="XM_054313520.1"/>
</dbReference>
<dbReference type="RefSeq" id="XP_054185154.1">
    <property type="nucleotide sequence ID" value="XM_054329179.1"/>
</dbReference>
<dbReference type="RefSeq" id="XP_054185155.1">
    <property type="nucleotide sequence ID" value="XM_054329180.1"/>
</dbReference>
<dbReference type="PDB" id="2EXX">
    <property type="method" value="X-ray"/>
    <property type="resolution" value="2.40 A"/>
    <property type="chains" value="A/B=1-299"/>
</dbReference>
<dbReference type="PDB" id="2WM3">
    <property type="method" value="X-ray"/>
    <property type="resolution" value="1.85 A"/>
    <property type="chains" value="A=1-298"/>
</dbReference>
<dbReference type="PDB" id="2WMD">
    <property type="method" value="X-ray"/>
    <property type="resolution" value="2.00 A"/>
    <property type="chains" value="A=1-298"/>
</dbReference>
<dbReference type="PDB" id="3DXF">
    <property type="method" value="X-ray"/>
    <property type="resolution" value="2.20 A"/>
    <property type="chains" value="A/B=1-299"/>
</dbReference>
<dbReference type="PDB" id="3E5M">
    <property type="method" value="X-ray"/>
    <property type="resolution" value="2.70 A"/>
    <property type="chains" value="A/B=1-299"/>
</dbReference>
<dbReference type="PDBsum" id="2EXX"/>
<dbReference type="PDBsum" id="2WM3"/>
<dbReference type="PDBsum" id="2WMD"/>
<dbReference type="PDBsum" id="3DXF"/>
<dbReference type="PDBsum" id="3E5M"/>
<dbReference type="SMR" id="Q9HBL8"/>
<dbReference type="BioGRID" id="121509">
    <property type="interactions" value="249"/>
</dbReference>
<dbReference type="DIP" id="DIP-60944N"/>
<dbReference type="FunCoup" id="Q9HBL8">
    <property type="interactions" value="1254"/>
</dbReference>
<dbReference type="IntAct" id="Q9HBL8">
    <property type="interactions" value="12"/>
</dbReference>
<dbReference type="STRING" id="9606.ENSP00000458762"/>
<dbReference type="BindingDB" id="Q9HBL8"/>
<dbReference type="ChEMBL" id="CHEMBL4802017"/>
<dbReference type="DrugBank" id="DB08784">
    <property type="generic name" value="2-(4-CHLORO-PHENYLAMINO)-NICOTINIC ACID"/>
</dbReference>
<dbReference type="GlyGen" id="Q9HBL8">
    <property type="glycosylation" value="1 site, 1 O-linked glycan (1 site)"/>
</dbReference>
<dbReference type="iPTMnet" id="Q9HBL8"/>
<dbReference type="PhosphoSitePlus" id="Q9HBL8"/>
<dbReference type="SwissPalm" id="Q9HBL8"/>
<dbReference type="BioMuta" id="NMRAL1"/>
<dbReference type="DMDM" id="74734255"/>
<dbReference type="CPTAC" id="CPTAC-1624"/>
<dbReference type="jPOST" id="Q9HBL8"/>
<dbReference type="MassIVE" id="Q9HBL8"/>
<dbReference type="PaxDb" id="9606-ENSP00000458762"/>
<dbReference type="PeptideAtlas" id="Q9HBL8"/>
<dbReference type="ProteomicsDB" id="81572"/>
<dbReference type="Pumba" id="Q9HBL8"/>
<dbReference type="Antibodypedia" id="24328">
    <property type="antibodies" value="102 antibodies from 25 providers"/>
</dbReference>
<dbReference type="DNASU" id="57407"/>
<dbReference type="Ensembl" id="ENST00000283429.11">
    <property type="protein sequence ID" value="ENSP00000283429.6"/>
    <property type="gene ID" value="ENSG00000153406.14"/>
</dbReference>
<dbReference type="Ensembl" id="ENST00000404295.7">
    <property type="protein sequence ID" value="ENSP00000383962.3"/>
    <property type="gene ID" value="ENSG00000153406.14"/>
</dbReference>
<dbReference type="Ensembl" id="ENST00000574425.5">
    <property type="protein sequence ID" value="ENSP00000460263.1"/>
    <property type="gene ID" value="ENSG00000153406.14"/>
</dbReference>
<dbReference type="Ensembl" id="ENST00000574733.5">
    <property type="protein sequence ID" value="ENSP00000458762.1"/>
    <property type="gene ID" value="ENSG00000153406.14"/>
</dbReference>
<dbReference type="Ensembl" id="ENST00000616587.2">
    <property type="protein sequence ID" value="ENSP00000479569.1"/>
    <property type="gene ID" value="ENSG00000274684.4"/>
</dbReference>
<dbReference type="Ensembl" id="ENST00000621810.4">
    <property type="protein sequence ID" value="ENSP00000478990.1"/>
    <property type="gene ID" value="ENSG00000274684.4"/>
</dbReference>
<dbReference type="Ensembl" id="ENST00000632013.1">
    <property type="protein sequence ID" value="ENSP00000488692.1"/>
    <property type="gene ID" value="ENSG00000274684.4"/>
</dbReference>
<dbReference type="Ensembl" id="ENST00000633085.1">
    <property type="protein sequence ID" value="ENSP00000488644.1"/>
    <property type="gene ID" value="ENSG00000274684.4"/>
</dbReference>
<dbReference type="GeneID" id="57407"/>
<dbReference type="KEGG" id="hsa:57407"/>
<dbReference type="MANE-Select" id="ENST00000283429.11">
    <property type="protein sequence ID" value="ENSP00000283429.6"/>
    <property type="RefSeq nucleotide sequence ID" value="NM_020677.6"/>
    <property type="RefSeq protein sequence ID" value="NP_065728.1"/>
</dbReference>
<dbReference type="UCSC" id="uc002cwm.4">
    <property type="organism name" value="human"/>
</dbReference>
<dbReference type="AGR" id="HGNC:24987"/>
<dbReference type="CTD" id="57407"/>
<dbReference type="DisGeNET" id="57407"/>
<dbReference type="GeneCards" id="NMRAL1"/>
<dbReference type="HGNC" id="HGNC:24987">
    <property type="gene designation" value="NMRAL1"/>
</dbReference>
<dbReference type="HPA" id="ENSG00000153406">
    <property type="expression patterns" value="Low tissue specificity"/>
</dbReference>
<dbReference type="MIM" id="620004">
    <property type="type" value="gene"/>
</dbReference>
<dbReference type="neXtProt" id="NX_Q9HBL8"/>
<dbReference type="OpenTargets" id="ENSG00000153406"/>
<dbReference type="PharmGKB" id="PA145007922"/>
<dbReference type="VEuPathDB" id="HostDB:ENSG00000153406"/>
<dbReference type="eggNOG" id="ENOG502RG69">
    <property type="taxonomic scope" value="Eukaryota"/>
</dbReference>
<dbReference type="GeneTree" id="ENSGT00940000160872"/>
<dbReference type="InParanoid" id="Q9HBL8"/>
<dbReference type="OMA" id="FMENTVA"/>
<dbReference type="OrthoDB" id="300709at2759"/>
<dbReference type="PAN-GO" id="Q9HBL8">
    <property type="GO annotations" value="0 GO annotations based on evolutionary models"/>
</dbReference>
<dbReference type="PhylomeDB" id="Q9HBL8"/>
<dbReference type="TreeFam" id="TF335532"/>
<dbReference type="BioCyc" id="MetaCyc:ENSG00000153406-MONOMER"/>
<dbReference type="PathwayCommons" id="Q9HBL8"/>
<dbReference type="Reactome" id="R-HSA-70635">
    <property type="pathway name" value="Urea cycle"/>
</dbReference>
<dbReference type="SignaLink" id="Q9HBL8"/>
<dbReference type="BioGRID-ORCS" id="57407">
    <property type="hits" value="17 hits in 1076 CRISPR screens"/>
</dbReference>
<dbReference type="ChiTaRS" id="NMRAL1">
    <property type="organism name" value="human"/>
</dbReference>
<dbReference type="EvolutionaryTrace" id="Q9HBL8"/>
<dbReference type="GenomeRNAi" id="57407"/>
<dbReference type="Pharos" id="Q9HBL8">
    <property type="development level" value="Tbio"/>
</dbReference>
<dbReference type="PRO" id="PR:Q9HBL8"/>
<dbReference type="Proteomes" id="UP000005640">
    <property type="component" value="Chromosome 16"/>
</dbReference>
<dbReference type="RNAct" id="Q9HBL8">
    <property type="molecule type" value="protein"/>
</dbReference>
<dbReference type="Bgee" id="ENSG00000153406">
    <property type="expression patterns" value="Expressed in granulocyte and 95 other cell types or tissues"/>
</dbReference>
<dbReference type="ExpressionAtlas" id="Q9HBL8">
    <property type="expression patterns" value="baseline and differential"/>
</dbReference>
<dbReference type="GO" id="GO:0005829">
    <property type="term" value="C:cytosol"/>
    <property type="evidence" value="ECO:0000304"/>
    <property type="project" value="Reactome"/>
</dbReference>
<dbReference type="GO" id="GO:0005654">
    <property type="term" value="C:nucleoplasm"/>
    <property type="evidence" value="ECO:0000314"/>
    <property type="project" value="HPA"/>
</dbReference>
<dbReference type="GO" id="GO:0005634">
    <property type="term" value="C:nucleus"/>
    <property type="evidence" value="ECO:0000318"/>
    <property type="project" value="GO_Central"/>
</dbReference>
<dbReference type="GO" id="GO:0048471">
    <property type="term" value="C:perinuclear region of cytoplasm"/>
    <property type="evidence" value="ECO:0007669"/>
    <property type="project" value="UniProtKB-SubCell"/>
</dbReference>
<dbReference type="GO" id="GO:0042802">
    <property type="term" value="F:identical protein binding"/>
    <property type="evidence" value="ECO:0000353"/>
    <property type="project" value="IntAct"/>
</dbReference>
<dbReference type="CDD" id="cd08947">
    <property type="entry name" value="NmrA_TMR_like_SDR_a"/>
    <property type="match status" value="1"/>
</dbReference>
<dbReference type="FunFam" id="3.40.50.720:FF:001609">
    <property type="entry name" value="NmrA-like family domain-containing protein 1"/>
    <property type="match status" value="1"/>
</dbReference>
<dbReference type="Gene3D" id="3.40.50.720">
    <property type="entry name" value="NAD(P)-binding Rossmann-like Domain"/>
    <property type="match status" value="1"/>
</dbReference>
<dbReference type="Gene3D" id="3.90.25.10">
    <property type="entry name" value="UDP-galactose 4-epimerase, domain 1"/>
    <property type="match status" value="1"/>
</dbReference>
<dbReference type="InterPro" id="IPR036291">
    <property type="entry name" value="NAD(P)-bd_dom_sf"/>
</dbReference>
<dbReference type="InterPro" id="IPR008030">
    <property type="entry name" value="NmrA-like"/>
</dbReference>
<dbReference type="InterPro" id="IPR051164">
    <property type="entry name" value="NmrA-like_oxidored"/>
</dbReference>
<dbReference type="PANTHER" id="PTHR42748">
    <property type="entry name" value="NITROGEN METABOLITE REPRESSION PROTEIN NMRA FAMILY MEMBER"/>
    <property type="match status" value="1"/>
</dbReference>
<dbReference type="PANTHER" id="PTHR42748:SF16">
    <property type="entry name" value="NMRA-LIKE FAMILY DOMAIN-CONTAINING PROTEIN 1"/>
    <property type="match status" value="1"/>
</dbReference>
<dbReference type="Pfam" id="PF05368">
    <property type="entry name" value="NmrA"/>
    <property type="match status" value="1"/>
</dbReference>
<dbReference type="SUPFAM" id="SSF51735">
    <property type="entry name" value="NAD(P)-binding Rossmann-fold domains"/>
    <property type="match status" value="1"/>
</dbReference>
<comment type="function">
    <text evidence="1 2 3">Redox sensor protein. Undergoes restructuring and subcellular redistribution in response to changes in intracellular NADPH/NADP(+) levels. At low NADPH concentrations the protein is found mainly as a monomer, and binds argininosuccinate synthase (ASS1), the enzyme involved in nitric oxide synthesis. Association with ASS1 impairs its activity and reduces the production of nitric oxide, which subsecuently prevents apoptosis. Under normal NADPH concentrations, the protein is found as a dimer and hides the binding site for ASS1. The homodimer binds one molecule of NADPH. Has higher affinity for NADPH than for NADP(+). Binding to NADPH is necessary to form a stable dimer.</text>
</comment>
<comment type="subunit">
    <text evidence="1 2 3 4">Homodimer. Interacts with ASS1. Interaction is enhanced by low NADPH/NADP(+) ratios, which results in inhibition of ASS1 activity.</text>
</comment>
<comment type="interaction">
    <interactant intactId="EBI-2862643">
        <id>Q9HBL8</id>
    </interactant>
    <interactant intactId="EBI-536842">
        <id>P00966</id>
        <label>ASS1</label>
    </interactant>
    <organismsDiffer>false</organismsDiffer>
    <experiments>3</experiments>
</comment>
<comment type="interaction">
    <interactant intactId="EBI-2862643">
        <id>Q9HBL8</id>
    </interactant>
    <interactant intactId="EBI-2862643">
        <id>Q9HBL8</id>
        <label>NMRAL1</label>
    </interactant>
    <organismsDiffer>false</organismsDiffer>
    <experiments>2</experiments>
</comment>
<comment type="interaction">
    <interactant intactId="EBI-2862643">
        <id>Q9HBL8</id>
    </interactant>
    <interactant intactId="EBI-748974">
        <id>Q96CV9</id>
        <label>OPTN</label>
    </interactant>
    <organismsDiffer>false</organismsDiffer>
    <experiments>3</experiments>
</comment>
<comment type="subcellular location">
    <subcellularLocation>
        <location>Cytoplasm</location>
    </subcellularLocation>
    <subcellularLocation>
        <location>Cytoplasm</location>
        <location>Perinuclear region</location>
    </subcellularLocation>
    <subcellularLocation>
        <location>Nucleus</location>
    </subcellularLocation>
    <text>Under normal redox growth conditions localizes in the cytoplasm and perinuclear region. Nuclear localization is promoted by increased intracellular nitric oxide and reduced NADPH/NADP(+) ratios.</text>
</comment>
<comment type="induction">
    <text evidence="2">By nitric oxide, cGMP and pro-inflammatory cytokines.</text>
</comment>
<comment type="miscellaneous">
    <text>Reduced levels of NMRAL1 by RNAi increases nitric oxide production and reduces cell viability. Overexpression of NMRAL1 increases cell viability.</text>
</comment>
<comment type="similarity">
    <text evidence="5">Belongs to the NmrA-type oxidoreductase family.</text>
</comment>
<comment type="caution">
    <text evidence="5">Lacks the conserved Tyr residue in the active site triad of Ser-Tyr-Lys necessary for dehydrogenase activity, suggesting that it has no oxidoreductase activity.</text>
</comment>
<keyword id="KW-0002">3D-structure</keyword>
<keyword id="KW-0963">Cytoplasm</keyword>
<keyword id="KW-0521">NADP</keyword>
<keyword id="KW-0539">Nucleus</keyword>
<keyword id="KW-1267">Proteomics identification</keyword>
<keyword id="KW-1185">Reference proteome</keyword>
<sequence>MVDKKLVVVFGGTGAQGGSVARTLLEDGTFKVRVVTRNPRKKAAKELRLQGAEVVQGDQDDQVIMELALNGAYATFIVTNYWESCSQEQEVKQGKLLADLARRLGLHYVVYSGLENIKKLTAGRLAAAHFDGKGEVEEYFRDIGVPMTSVRLPCYFENLLSHFLPQKAPDGKSYLLSLPTGDVPMDGMSVSDLGPVVLSLLKMPEKYVGQNIGLSTCRHTAEEYAALLTKHTRKVVHDAKMTPEDYEKLGFPGARDLANMFRFYALRPDRDIELTLRLNPKALTLDQWLEQHKGDFNLL</sequence>
<reference key="1">
    <citation type="submission" date="2000-01" db="EMBL/GenBank/DDBJ databases">
        <authorList>
            <person name="Xiao H."/>
            <person name="Song H."/>
            <person name="Gao G."/>
            <person name="Ren S."/>
            <person name="Chen Z."/>
            <person name="Han Z."/>
        </authorList>
    </citation>
    <scope>NUCLEOTIDE SEQUENCE [LARGE SCALE MRNA]</scope>
    <source>
        <tissue>Adrenal gland</tissue>
    </source>
</reference>
<reference key="2">
    <citation type="journal article" date="2004" name="Nature">
        <title>The sequence and analysis of duplication-rich human chromosome 16.</title>
        <authorList>
            <person name="Martin J."/>
            <person name="Han C."/>
            <person name="Gordon L.A."/>
            <person name="Terry A."/>
            <person name="Prabhakar S."/>
            <person name="She X."/>
            <person name="Xie G."/>
            <person name="Hellsten U."/>
            <person name="Chan Y.M."/>
            <person name="Altherr M."/>
            <person name="Couronne O."/>
            <person name="Aerts A."/>
            <person name="Bajorek E."/>
            <person name="Black S."/>
            <person name="Blumer H."/>
            <person name="Branscomb E."/>
            <person name="Brown N.C."/>
            <person name="Bruno W.J."/>
            <person name="Buckingham J.M."/>
            <person name="Callen D.F."/>
            <person name="Campbell C.S."/>
            <person name="Campbell M.L."/>
            <person name="Campbell E.W."/>
            <person name="Caoile C."/>
            <person name="Challacombe J.F."/>
            <person name="Chasteen L.A."/>
            <person name="Chertkov O."/>
            <person name="Chi H.C."/>
            <person name="Christensen M."/>
            <person name="Clark L.M."/>
            <person name="Cohn J.D."/>
            <person name="Denys M."/>
            <person name="Detter J.C."/>
            <person name="Dickson M."/>
            <person name="Dimitrijevic-Bussod M."/>
            <person name="Escobar J."/>
            <person name="Fawcett J.J."/>
            <person name="Flowers D."/>
            <person name="Fotopulos D."/>
            <person name="Glavina T."/>
            <person name="Gomez M."/>
            <person name="Gonzales E."/>
            <person name="Goodstein D."/>
            <person name="Goodwin L.A."/>
            <person name="Grady D.L."/>
            <person name="Grigoriev I."/>
            <person name="Groza M."/>
            <person name="Hammon N."/>
            <person name="Hawkins T."/>
            <person name="Haydu L."/>
            <person name="Hildebrand C.E."/>
            <person name="Huang W."/>
            <person name="Israni S."/>
            <person name="Jett J."/>
            <person name="Jewett P.B."/>
            <person name="Kadner K."/>
            <person name="Kimball H."/>
            <person name="Kobayashi A."/>
            <person name="Krawczyk M.-C."/>
            <person name="Leyba T."/>
            <person name="Longmire J.L."/>
            <person name="Lopez F."/>
            <person name="Lou Y."/>
            <person name="Lowry S."/>
            <person name="Ludeman T."/>
            <person name="Manohar C.F."/>
            <person name="Mark G.A."/>
            <person name="McMurray K.L."/>
            <person name="Meincke L.J."/>
            <person name="Morgan J."/>
            <person name="Moyzis R.K."/>
            <person name="Mundt M.O."/>
            <person name="Munk A.C."/>
            <person name="Nandkeshwar R.D."/>
            <person name="Pitluck S."/>
            <person name="Pollard M."/>
            <person name="Predki P."/>
            <person name="Parson-Quintana B."/>
            <person name="Ramirez L."/>
            <person name="Rash S."/>
            <person name="Retterer J."/>
            <person name="Ricke D.O."/>
            <person name="Robinson D.L."/>
            <person name="Rodriguez A."/>
            <person name="Salamov A."/>
            <person name="Saunders E.H."/>
            <person name="Scott D."/>
            <person name="Shough T."/>
            <person name="Stallings R.L."/>
            <person name="Stalvey M."/>
            <person name="Sutherland R.D."/>
            <person name="Tapia R."/>
            <person name="Tesmer J.G."/>
            <person name="Thayer N."/>
            <person name="Thompson L.S."/>
            <person name="Tice H."/>
            <person name="Torney D.C."/>
            <person name="Tran-Gyamfi M."/>
            <person name="Tsai M."/>
            <person name="Ulanovsky L.E."/>
            <person name="Ustaszewska A."/>
            <person name="Vo N."/>
            <person name="White P.S."/>
            <person name="Williams A.L."/>
            <person name="Wills P.L."/>
            <person name="Wu J.-R."/>
            <person name="Wu K."/>
            <person name="Yang J."/>
            <person name="DeJong P."/>
            <person name="Bruce D."/>
            <person name="Doggett N.A."/>
            <person name="Deaven L."/>
            <person name="Schmutz J."/>
            <person name="Grimwood J."/>
            <person name="Richardson P."/>
            <person name="Rokhsar D.S."/>
            <person name="Eichler E.E."/>
            <person name="Gilna P."/>
            <person name="Lucas S.M."/>
            <person name="Myers R.M."/>
            <person name="Rubin E.M."/>
            <person name="Pennacchio L.A."/>
        </authorList>
    </citation>
    <scope>NUCLEOTIDE SEQUENCE [LARGE SCALE GENOMIC DNA]</scope>
</reference>
<reference key="3">
    <citation type="journal article" date="2004" name="Genome Res.">
        <title>The status, quality, and expansion of the NIH full-length cDNA project: the Mammalian Gene Collection (MGC).</title>
        <authorList>
            <consortium name="The MGC Project Team"/>
        </authorList>
    </citation>
    <scope>NUCLEOTIDE SEQUENCE [LARGE SCALE MRNA]</scope>
    <source>
        <tissue>Skin</tissue>
        <tissue>Uterus</tissue>
    </source>
</reference>
<reference key="4">
    <citation type="journal article" date="2008" name="J. Biol. Chem.">
        <title>An NADPH sensor protein (HSCARG) down-regulates nitric oxide synthesis by association with argininosuccinate synthetase and is essential for epithelial cell viability.</title>
        <authorList>
            <person name="Zhao Y."/>
            <person name="Zhang J."/>
            <person name="Li H."/>
            <person name="Li Y."/>
            <person name="Ren J."/>
            <person name="Luo M."/>
            <person name="Zheng X."/>
        </authorList>
    </citation>
    <scope>FUNCTION</scope>
    <scope>INTERACTION WITH ASS1</scope>
    <scope>SUBCELLULAR LOCATION</scope>
    <scope>INDUCTION</scope>
    <scope>REGION</scope>
</reference>
<reference key="5">
    <citation type="journal article" date="2012" name="Proc. Natl. Acad. Sci. U.S.A.">
        <title>N-terminal acetylome analyses and functional insights of the N-terminal acetyltransferase NatB.</title>
        <authorList>
            <person name="Van Damme P."/>
            <person name="Lasa M."/>
            <person name="Polevoda B."/>
            <person name="Gazquez C."/>
            <person name="Elosegui-Artola A."/>
            <person name="Kim D.S."/>
            <person name="De Juan-Pardo E."/>
            <person name="Demeyer K."/>
            <person name="Hole K."/>
            <person name="Larrea E."/>
            <person name="Timmerman E."/>
            <person name="Prieto J."/>
            <person name="Arnesen T."/>
            <person name="Sherman F."/>
            <person name="Gevaert K."/>
            <person name="Aldabe R."/>
        </authorList>
    </citation>
    <scope>IDENTIFICATION BY MASS SPECTROMETRY [LARGE SCALE ANALYSIS]</scope>
</reference>
<reference key="6">
    <citation type="journal article" date="2007" name="Proc. Natl. Acad. Sci. U.S.A.">
        <title>Restructuring of the dinucleotide-binding fold in an NADP(H) sensor protein.</title>
        <authorList>
            <person name="Zheng X."/>
            <person name="Dai X."/>
            <person name="Zhao Y."/>
            <person name="Chen Q."/>
            <person name="Lu F."/>
            <person name="Yao D."/>
            <person name="Yu Q."/>
            <person name="Liu X."/>
            <person name="Zhang C."/>
            <person name="Gu X."/>
            <person name="Luo M."/>
        </authorList>
    </citation>
    <scope>X-RAY CRYSTALLOGRAPHY (2.4 ANGSTROMS) IN COMPLEX WITH NADP</scope>
    <scope>FUNCTION</scope>
    <scope>HOMODIMERIZATION</scope>
    <scope>INTERACTION WITH ASS1</scope>
    <scope>SUBCELLULAR LOCATION</scope>
</reference>
<reference key="7">
    <citation type="journal article" date="2009" name="J. Mol. Biol.">
        <title>NADPH is an allosteric regulator of HSCARG.</title>
        <authorList>
            <person name="Dai X."/>
            <person name="Li Y."/>
            <person name="Meng G."/>
            <person name="Yao S."/>
            <person name="Zhao Y."/>
            <person name="Yu Q."/>
            <person name="Zhang J."/>
            <person name="Luo M."/>
            <person name="Zheng X."/>
        </authorList>
    </citation>
    <scope>X-RAY CRYSTALLOGRAPHY (2.2 ANGSTROMS) OF MUTANT ALA-37</scope>
    <scope>X-RAY CRYSTALLOGRAPHY (2.8 ANGSTROMS) OF MUTANT ALA-81</scope>
    <scope>FUNCTION</scope>
    <scope>SUBUNIT</scope>
    <scope>SUBCELLULAR LOCATION</scope>
    <scope>MUTAGENESIS OF ARG-37; LYS-41; TYR-81 AND LYS-133</scope>
</reference>
<reference key="8">
    <citation type="submission" date="2009-08" db="PDB data bank">
        <title>Crystal structure of NMRA-like family domain containing protein 1 in complex with niflumic acid.</title>
        <authorList>
            <consortium name="Structural genomics consortium (SGC)"/>
        </authorList>
    </citation>
    <scope>X-RAY CRYSTALLOGRAPHY (1.85 ANGSTROMS) IN COMPLEX WITH NIFLUMIC ACID</scope>
</reference>
<feature type="chain" id="PRO_0000278204" description="NmrA-like family domain-containing protein 1">
    <location>
        <begin position="1"/>
        <end position="299"/>
    </location>
</feature>
<feature type="region of interest" description="Interaction with ASS1">
    <location>
        <begin position="153"/>
        <end position="189"/>
    </location>
</feature>
<feature type="binding site" description="in other chain" evidence="1">
    <location>
        <begin position="11"/>
        <end position="16"/>
    </location>
    <ligand>
        <name>NADP(+)</name>
        <dbReference type="ChEBI" id="CHEBI:58349"/>
        <note>ligand shared between dimeric partners</note>
    </ligand>
</feature>
<feature type="binding site" description="in other chain" evidence="1">
    <location>
        <begin position="37"/>
        <end position="41"/>
    </location>
    <ligand>
        <name>NADP(+)</name>
        <dbReference type="ChEBI" id="CHEBI:58349"/>
        <note>ligand shared between dimeric partners</note>
    </ligand>
</feature>
<feature type="binding site" description="in other chain" evidence="1">
    <location>
        <begin position="58"/>
        <end position="59"/>
    </location>
    <ligand>
        <name>NADP(+)</name>
        <dbReference type="ChEBI" id="CHEBI:58349"/>
        <note>ligand shared between dimeric partners</note>
    </ligand>
</feature>
<feature type="binding site" evidence="1">
    <location>
        <position position="62"/>
    </location>
    <ligand>
        <name>NADP(+)</name>
        <dbReference type="ChEBI" id="CHEBI:58349"/>
        <note>ligand shared between dimeric partners</note>
    </ligand>
</feature>
<feature type="binding site" description="in other chain" evidence="1">
    <location>
        <begin position="79"/>
        <end position="81"/>
    </location>
    <ligand>
        <name>NADP(+)</name>
        <dbReference type="ChEBI" id="CHEBI:58349"/>
        <note>ligand shared between dimeric partners</note>
    </ligand>
</feature>
<feature type="binding site" evidence="1">
    <location>
        <position position="92"/>
    </location>
    <ligand>
        <name>NADP(+)</name>
        <dbReference type="ChEBI" id="CHEBI:58349"/>
        <note>ligand shared between dimeric partners</note>
    </ligand>
</feature>
<feature type="binding site" description="in other chain" evidence="1">
    <location>
        <position position="133"/>
    </location>
    <ligand>
        <name>NADP(+)</name>
        <dbReference type="ChEBI" id="CHEBI:58349"/>
        <note>ligand shared between dimeric partners</note>
    </ligand>
</feature>
<feature type="binding site" description="in other chain" evidence="1">
    <location>
        <begin position="155"/>
        <end position="158"/>
    </location>
    <ligand>
        <name>NADP(+)</name>
        <dbReference type="ChEBI" id="CHEBI:58349"/>
        <note>ligand shared between dimeric partners</note>
    </ligand>
</feature>
<feature type="sequence variant" id="VAR_030689" description="In dbSNP:rs11557236.">
    <original>T</original>
    <variation>I</variation>
    <location>
        <position position="23"/>
    </location>
</feature>
<feature type="sequence variant" id="VAR_030690" description="In dbSNP:rs3747582.">
    <original>P</original>
    <variation>L</variation>
    <location>
        <position position="252"/>
    </location>
</feature>
<feature type="mutagenesis site" description="Impairs binding to NADPH; abolishes the ability to dimerize; enhances binding to ASS1; reduces perinuclear localization." evidence="3">
    <original>R</original>
    <variation>A</variation>
    <location>
        <position position="37"/>
    </location>
</feature>
<feature type="mutagenesis site" description="Does not impair binding to NADPH; maintains the dimerization properties as the wild type; does not affect binding to ASS1; does not affect perinuclear localization." evidence="3">
    <original>K</original>
    <variation>S</variation>
    <location>
        <position position="41"/>
    </location>
</feature>
<feature type="mutagenesis site" description="Impairs binding to NADPH; abolishes the ability to dimerize; enhances binding to ASS1; reduces perinuclear localization." evidence="3">
    <original>Y</original>
    <variation>A</variation>
    <location>
        <position position="81"/>
    </location>
</feature>
<feature type="mutagenesis site" description="Impairs binding to NADPH; enhances binding to ASS1; reduces perinuclear localization." evidence="3">
    <original>K</original>
    <variation>A</variation>
    <location>
        <position position="133"/>
    </location>
</feature>
<feature type="strand" evidence="6">
    <location>
        <begin position="6"/>
        <end position="10"/>
    </location>
</feature>
<feature type="turn" evidence="6">
    <location>
        <begin position="11"/>
        <end position="13"/>
    </location>
</feature>
<feature type="helix" evidence="6">
    <location>
        <begin position="15"/>
        <end position="27"/>
    </location>
</feature>
<feature type="strand" evidence="6">
    <location>
        <begin position="29"/>
        <end position="37"/>
    </location>
</feature>
<feature type="helix" evidence="6">
    <location>
        <begin position="42"/>
        <end position="49"/>
    </location>
</feature>
<feature type="strand" evidence="6">
    <location>
        <begin position="53"/>
        <end position="56"/>
    </location>
</feature>
<feature type="helix" evidence="6">
    <location>
        <begin position="62"/>
        <end position="69"/>
    </location>
</feature>
<feature type="strand" evidence="6">
    <location>
        <begin position="73"/>
        <end position="77"/>
    </location>
</feature>
<feature type="helix" evidence="6">
    <location>
        <begin position="81"/>
        <end position="83"/>
    </location>
</feature>
<feature type="helix" evidence="6">
    <location>
        <begin position="87"/>
        <end position="104"/>
    </location>
</feature>
<feature type="strand" evidence="6">
    <location>
        <begin position="107"/>
        <end position="111"/>
    </location>
</feature>
<feature type="helix" evidence="6">
    <location>
        <begin position="117"/>
        <end position="120"/>
    </location>
</feature>
<feature type="turn" evidence="6">
    <location>
        <begin position="121"/>
        <end position="123"/>
    </location>
</feature>
<feature type="helix" evidence="6">
    <location>
        <begin position="128"/>
        <end position="143"/>
    </location>
</feature>
<feature type="strand" evidence="6">
    <location>
        <begin position="147"/>
        <end position="151"/>
    </location>
</feature>
<feature type="helix" evidence="6">
    <location>
        <begin position="156"/>
        <end position="160"/>
    </location>
</feature>
<feature type="turn" evidence="6">
    <location>
        <begin position="161"/>
        <end position="163"/>
    </location>
</feature>
<feature type="strand" evidence="6">
    <location>
        <begin position="171"/>
        <end position="176"/>
    </location>
</feature>
<feature type="strand" evidence="6">
    <location>
        <begin position="185"/>
        <end position="188"/>
    </location>
</feature>
<feature type="helix" evidence="6">
    <location>
        <begin position="190"/>
        <end position="192"/>
    </location>
</feature>
<feature type="helix" evidence="6">
    <location>
        <begin position="193"/>
        <end position="202"/>
    </location>
</feature>
<feature type="helix" evidence="6">
    <location>
        <begin position="204"/>
        <end position="207"/>
    </location>
</feature>
<feature type="strand" evidence="6">
    <location>
        <begin position="211"/>
        <end position="213"/>
    </location>
</feature>
<feature type="strand" evidence="6">
    <location>
        <begin position="216"/>
        <end position="219"/>
    </location>
</feature>
<feature type="helix" evidence="6">
    <location>
        <begin position="221"/>
        <end position="232"/>
    </location>
</feature>
<feature type="strand" evidence="6">
    <location>
        <begin position="236"/>
        <end position="238"/>
    </location>
</feature>
<feature type="helix" evidence="6">
    <location>
        <begin position="244"/>
        <end position="247"/>
    </location>
</feature>
<feature type="helix" evidence="6">
    <location>
        <begin position="254"/>
        <end position="264"/>
    </location>
</feature>
<feature type="helix" evidence="6">
    <location>
        <begin position="272"/>
        <end position="278"/>
    </location>
</feature>
<feature type="helix" evidence="6">
    <location>
        <begin position="285"/>
        <end position="292"/>
    </location>
</feature>
<feature type="helix" evidence="6">
    <location>
        <begin position="293"/>
        <end position="295"/>
    </location>
</feature>